<proteinExistence type="inferred from homology"/>
<gene>
    <name type="primary">aatA</name>
    <name type="synonym">aspC</name>
    <name type="ordered locus">RC0120</name>
</gene>
<name>AAPAT_RICCN</name>
<organism>
    <name type="scientific">Rickettsia conorii (strain ATCC VR-613 / Malish 7)</name>
    <dbReference type="NCBI Taxonomy" id="272944"/>
    <lineage>
        <taxon>Bacteria</taxon>
        <taxon>Pseudomonadati</taxon>
        <taxon>Pseudomonadota</taxon>
        <taxon>Alphaproteobacteria</taxon>
        <taxon>Rickettsiales</taxon>
        <taxon>Rickettsiaceae</taxon>
        <taxon>Rickettsieae</taxon>
        <taxon>Rickettsia</taxon>
        <taxon>spotted fever group</taxon>
    </lineage>
</organism>
<protein>
    <recommendedName>
        <fullName evidence="2">Probable aspartate/prephenate aminotransferase</fullName>
        <shortName evidence="2">AspAT / PAT</shortName>
        <ecNumber evidence="2">2.6.1.1</ecNumber>
        <ecNumber evidence="2">2.6.1.79</ecNumber>
    </recommendedName>
    <alternativeName>
        <fullName>Transaminase A</fullName>
    </alternativeName>
</protein>
<dbReference type="EC" id="2.6.1.1" evidence="2"/>
<dbReference type="EC" id="2.6.1.79" evidence="2"/>
<dbReference type="EMBL" id="AE006914">
    <property type="protein sequence ID" value="AAL02658.1"/>
    <property type="molecule type" value="Genomic_DNA"/>
</dbReference>
<dbReference type="PIR" id="H97714">
    <property type="entry name" value="H97714"/>
</dbReference>
<dbReference type="RefSeq" id="WP_010976800.1">
    <property type="nucleotide sequence ID" value="NC_003103.1"/>
</dbReference>
<dbReference type="SMR" id="Q92JE7"/>
<dbReference type="GeneID" id="928075"/>
<dbReference type="KEGG" id="rco:RC0120"/>
<dbReference type="PATRIC" id="fig|272944.4.peg.142"/>
<dbReference type="HOGENOM" id="CLU_017584_4_3_5"/>
<dbReference type="Proteomes" id="UP000000816">
    <property type="component" value="Chromosome"/>
</dbReference>
<dbReference type="GO" id="GO:0005737">
    <property type="term" value="C:cytoplasm"/>
    <property type="evidence" value="ECO:0007669"/>
    <property type="project" value="UniProtKB-SubCell"/>
</dbReference>
<dbReference type="GO" id="GO:0033854">
    <property type="term" value="F:glutamate-prephenate aminotransferase activity"/>
    <property type="evidence" value="ECO:0007669"/>
    <property type="project" value="UniProtKB-EC"/>
</dbReference>
<dbReference type="GO" id="GO:0004069">
    <property type="term" value="F:L-aspartate:2-oxoglutarate aminotransferase activity"/>
    <property type="evidence" value="ECO:0007669"/>
    <property type="project" value="UniProtKB-EC"/>
</dbReference>
<dbReference type="GO" id="GO:0030170">
    <property type="term" value="F:pyridoxal phosphate binding"/>
    <property type="evidence" value="ECO:0007669"/>
    <property type="project" value="InterPro"/>
</dbReference>
<dbReference type="GO" id="GO:0006520">
    <property type="term" value="P:amino acid metabolic process"/>
    <property type="evidence" value="ECO:0007669"/>
    <property type="project" value="InterPro"/>
</dbReference>
<dbReference type="GO" id="GO:0009058">
    <property type="term" value="P:biosynthetic process"/>
    <property type="evidence" value="ECO:0007669"/>
    <property type="project" value="InterPro"/>
</dbReference>
<dbReference type="CDD" id="cd00609">
    <property type="entry name" value="AAT_like"/>
    <property type="match status" value="1"/>
</dbReference>
<dbReference type="FunFam" id="3.40.640.10:FF:000033">
    <property type="entry name" value="Aspartate aminotransferase"/>
    <property type="match status" value="1"/>
</dbReference>
<dbReference type="Gene3D" id="3.90.1150.10">
    <property type="entry name" value="Aspartate Aminotransferase, domain 1"/>
    <property type="match status" value="1"/>
</dbReference>
<dbReference type="Gene3D" id="3.40.640.10">
    <property type="entry name" value="Type I PLP-dependent aspartate aminotransferase-like (Major domain)"/>
    <property type="match status" value="1"/>
</dbReference>
<dbReference type="InterPro" id="IPR004839">
    <property type="entry name" value="Aminotransferase_I/II_large"/>
</dbReference>
<dbReference type="InterPro" id="IPR050596">
    <property type="entry name" value="AspAT/PAT-like"/>
</dbReference>
<dbReference type="InterPro" id="IPR004838">
    <property type="entry name" value="NHTrfase_class1_PyrdxlP-BS"/>
</dbReference>
<dbReference type="InterPro" id="IPR015424">
    <property type="entry name" value="PyrdxlP-dep_Trfase"/>
</dbReference>
<dbReference type="InterPro" id="IPR015421">
    <property type="entry name" value="PyrdxlP-dep_Trfase_major"/>
</dbReference>
<dbReference type="InterPro" id="IPR015422">
    <property type="entry name" value="PyrdxlP-dep_Trfase_small"/>
</dbReference>
<dbReference type="PANTHER" id="PTHR46383">
    <property type="entry name" value="ASPARTATE AMINOTRANSFERASE"/>
    <property type="match status" value="1"/>
</dbReference>
<dbReference type="PANTHER" id="PTHR46383:SF1">
    <property type="entry name" value="ASPARTATE AMINOTRANSFERASE"/>
    <property type="match status" value="1"/>
</dbReference>
<dbReference type="Pfam" id="PF00155">
    <property type="entry name" value="Aminotran_1_2"/>
    <property type="match status" value="1"/>
</dbReference>
<dbReference type="PRINTS" id="PR00753">
    <property type="entry name" value="ACCSYNTHASE"/>
</dbReference>
<dbReference type="SUPFAM" id="SSF53383">
    <property type="entry name" value="PLP-dependent transferases"/>
    <property type="match status" value="1"/>
</dbReference>
<dbReference type="PROSITE" id="PS00105">
    <property type="entry name" value="AA_TRANSFER_CLASS_1"/>
    <property type="match status" value="1"/>
</dbReference>
<keyword id="KW-0032">Aminotransferase</keyword>
<keyword id="KW-0963">Cytoplasm</keyword>
<keyword id="KW-0663">Pyridoxal phosphate</keyword>
<keyword id="KW-0808">Transferase</keyword>
<evidence type="ECO:0000250" key="1">
    <source>
        <dbReference type="UniProtKB" id="P00509"/>
    </source>
</evidence>
<evidence type="ECO:0000250" key="2">
    <source>
        <dbReference type="UniProtKB" id="Q02635"/>
    </source>
</evidence>
<evidence type="ECO:0000250" key="3">
    <source>
        <dbReference type="UniProtKB" id="Q56232"/>
    </source>
</evidence>
<evidence type="ECO:0000305" key="4"/>
<feature type="chain" id="PRO_0000123850" description="Probable aspartate/prephenate aminotransferase">
    <location>
        <begin position="1"/>
        <end position="401"/>
    </location>
</feature>
<feature type="binding site" evidence="1">
    <location>
        <position position="39"/>
    </location>
    <ligand>
        <name>L-aspartate</name>
        <dbReference type="ChEBI" id="CHEBI:29991"/>
    </ligand>
</feature>
<feature type="binding site" evidence="3">
    <location>
        <position position="125"/>
    </location>
    <ligand>
        <name>L-aspartate</name>
        <dbReference type="ChEBI" id="CHEBI:29991"/>
    </ligand>
</feature>
<feature type="binding site" evidence="3">
    <location>
        <position position="175"/>
    </location>
    <ligand>
        <name>L-aspartate</name>
        <dbReference type="ChEBI" id="CHEBI:29991"/>
    </ligand>
</feature>
<feature type="binding site" evidence="3">
    <location>
        <position position="375"/>
    </location>
    <ligand>
        <name>L-aspartate</name>
        <dbReference type="ChEBI" id="CHEBI:29991"/>
    </ligand>
</feature>
<feature type="site" description="Important for prephenate aminotransferase activity" evidence="3">
    <location>
        <position position="12"/>
    </location>
</feature>
<feature type="modified residue" description="N6-(pyridoxal phosphate)lysine" evidence="3">
    <location>
        <position position="239"/>
    </location>
</feature>
<accession>Q92JE7</accession>
<reference key="1">
    <citation type="journal article" date="2001" name="Science">
        <title>Mechanisms of evolution in Rickettsia conorii and R. prowazekii.</title>
        <authorList>
            <person name="Ogata H."/>
            <person name="Audic S."/>
            <person name="Renesto-Audiffren P."/>
            <person name="Fournier P.-E."/>
            <person name="Barbe V."/>
            <person name="Samson D."/>
            <person name="Roux V."/>
            <person name="Cossart P."/>
            <person name="Weissenbach J."/>
            <person name="Claverie J.-M."/>
            <person name="Raoult D."/>
        </authorList>
    </citation>
    <scope>NUCLEOTIDE SEQUENCE [LARGE SCALE GENOMIC DNA]</scope>
    <source>
        <strain>ATCC VR-613 / Malish 7</strain>
    </source>
</reference>
<sequence length="401" mass="44576">MSIISTRLSSIKPSPTLAVVKKTLELKKAGVDIITLGAGEPDFDTPDNIKEGAIKAIKDGFTKYTNVEGMPLLKQAIKDKFKRENNIDYELDEIIVSTGGKQVIYNLFMASLDQGDEVIIPAPYWVSYPDMVALSTGTPVFVNCGIENNFKLSAEALERSITDKTKWLIINSPSNPTGASYNFEELENIAKVLRKYSHVNVMSDDIYEHITFDDFKFYTLAQIAPDLKKRIFTVNGVSKAYSMTGWRIGYGAGSKTLIKAMTIIQSQSTSNPCSISQMAAIEALNGPQDYIKPNALNCQKKRDLALSILKRVKYFECYKPEGAFYLFVKCDKIFGHKTKSGTIIANSNDFAEYLLEEAKVAVVPGIAFGLEGYFRISYATSMEELEKACIRIEKTIDVIPA</sequence>
<comment type="function">
    <text evidence="2">Catalyzes the reversible conversion of aspartate and 2-oxoglutarate to glutamate and oxaloacetate. Can also transaminate prephenate in the presence of glutamate.</text>
</comment>
<comment type="catalytic activity">
    <reaction evidence="2">
        <text>L-aspartate + 2-oxoglutarate = oxaloacetate + L-glutamate</text>
        <dbReference type="Rhea" id="RHEA:21824"/>
        <dbReference type="ChEBI" id="CHEBI:16452"/>
        <dbReference type="ChEBI" id="CHEBI:16810"/>
        <dbReference type="ChEBI" id="CHEBI:29985"/>
        <dbReference type="ChEBI" id="CHEBI:29991"/>
        <dbReference type="EC" id="2.6.1.1"/>
    </reaction>
</comment>
<comment type="catalytic activity">
    <reaction evidence="2">
        <text>L-arogenate + 2-oxoglutarate = prephenate + L-glutamate</text>
        <dbReference type="Rhea" id="RHEA:22880"/>
        <dbReference type="ChEBI" id="CHEBI:16810"/>
        <dbReference type="ChEBI" id="CHEBI:29934"/>
        <dbReference type="ChEBI" id="CHEBI:29985"/>
        <dbReference type="ChEBI" id="CHEBI:58180"/>
        <dbReference type="EC" id="2.6.1.79"/>
    </reaction>
</comment>
<comment type="cofactor">
    <cofactor evidence="2">
        <name>pyridoxal 5'-phosphate</name>
        <dbReference type="ChEBI" id="CHEBI:597326"/>
    </cofactor>
</comment>
<comment type="subunit">
    <text evidence="2">Homodimer.</text>
</comment>
<comment type="subcellular location">
    <subcellularLocation>
        <location evidence="2">Cytoplasm</location>
    </subcellularLocation>
</comment>
<comment type="similarity">
    <text evidence="4">Belongs to the class-I pyridoxal-phosphate-dependent aminotransferase family.</text>
</comment>